<accession>B7KPM8</accession>
<keyword id="KW-0028">Amino-acid biosynthesis</keyword>
<keyword id="KW-0963">Cytoplasm</keyword>
<keyword id="KW-0368">Histidine biosynthesis</keyword>
<keyword id="KW-0456">Lyase</keyword>
<gene>
    <name evidence="1" type="primary">hisF</name>
    <name type="ordered locus">Mchl_2775</name>
</gene>
<feature type="chain" id="PRO_1000148926" description="Imidazole glycerol phosphate synthase subunit HisF">
    <location>
        <begin position="1"/>
        <end position="258"/>
    </location>
</feature>
<feature type="active site" evidence="1">
    <location>
        <position position="11"/>
    </location>
</feature>
<feature type="active site" evidence="1">
    <location>
        <position position="130"/>
    </location>
</feature>
<name>HIS6_METC4</name>
<evidence type="ECO:0000255" key="1">
    <source>
        <dbReference type="HAMAP-Rule" id="MF_01013"/>
    </source>
</evidence>
<sequence>MLKTRIIPCLDVKDGRVVKGVQFLELRDAGDPVESAKAYDAAGADELCFLDITASHEARGTLLDVVSRTAEACFMPLTVGGGVRTVADVRTLLLAGADKVGINTAAVKNPDFVAEAAEKFGDQCIVVAIDAKRVSGPDEAARWEIFTHGGRNPTGIDAVEFARTVSERGAGELLVTSMDKDGTRSGYDLALTRAIADAVRVPVIASGGVGGLDDLVAGVRDGGASAVLAASIFHFGQHTVGEAKAHMAAAGLAMRLDP</sequence>
<organism>
    <name type="scientific">Methylorubrum extorquens (strain CM4 / NCIMB 13688)</name>
    <name type="common">Methylobacterium extorquens</name>
    <dbReference type="NCBI Taxonomy" id="440085"/>
    <lineage>
        <taxon>Bacteria</taxon>
        <taxon>Pseudomonadati</taxon>
        <taxon>Pseudomonadota</taxon>
        <taxon>Alphaproteobacteria</taxon>
        <taxon>Hyphomicrobiales</taxon>
        <taxon>Methylobacteriaceae</taxon>
        <taxon>Methylorubrum</taxon>
    </lineage>
</organism>
<reference key="1">
    <citation type="submission" date="2008-12" db="EMBL/GenBank/DDBJ databases">
        <title>Complete sequence of chromosome of Methylobacterium chloromethanicum CM4.</title>
        <authorList>
            <consortium name="US DOE Joint Genome Institute"/>
            <person name="Lucas S."/>
            <person name="Copeland A."/>
            <person name="Lapidus A."/>
            <person name="Glavina del Rio T."/>
            <person name="Dalin E."/>
            <person name="Tice H."/>
            <person name="Bruce D."/>
            <person name="Goodwin L."/>
            <person name="Pitluck S."/>
            <person name="Chertkov O."/>
            <person name="Brettin T."/>
            <person name="Detter J.C."/>
            <person name="Han C."/>
            <person name="Larimer F."/>
            <person name="Land M."/>
            <person name="Hauser L."/>
            <person name="Kyrpides N."/>
            <person name="Mikhailova N."/>
            <person name="Marx C."/>
            <person name="Richardson P."/>
        </authorList>
    </citation>
    <scope>NUCLEOTIDE SEQUENCE [LARGE SCALE GENOMIC DNA]</scope>
    <source>
        <strain>CM4 / NCIMB 13688</strain>
    </source>
</reference>
<dbReference type="EC" id="4.3.2.10" evidence="1"/>
<dbReference type="EMBL" id="CP001298">
    <property type="protein sequence ID" value="ACK83614.1"/>
    <property type="molecule type" value="Genomic_DNA"/>
</dbReference>
<dbReference type="RefSeq" id="WP_015951086.1">
    <property type="nucleotide sequence ID" value="NC_011757.1"/>
</dbReference>
<dbReference type="SMR" id="B7KPM8"/>
<dbReference type="KEGG" id="mch:Mchl_2775"/>
<dbReference type="HOGENOM" id="CLU_048577_4_0_5"/>
<dbReference type="UniPathway" id="UPA00031">
    <property type="reaction ID" value="UER00010"/>
</dbReference>
<dbReference type="Proteomes" id="UP000002385">
    <property type="component" value="Chromosome"/>
</dbReference>
<dbReference type="GO" id="GO:0005737">
    <property type="term" value="C:cytoplasm"/>
    <property type="evidence" value="ECO:0007669"/>
    <property type="project" value="UniProtKB-SubCell"/>
</dbReference>
<dbReference type="GO" id="GO:0000107">
    <property type="term" value="F:imidazoleglycerol-phosphate synthase activity"/>
    <property type="evidence" value="ECO:0007669"/>
    <property type="project" value="UniProtKB-UniRule"/>
</dbReference>
<dbReference type="GO" id="GO:0016829">
    <property type="term" value="F:lyase activity"/>
    <property type="evidence" value="ECO:0007669"/>
    <property type="project" value="UniProtKB-KW"/>
</dbReference>
<dbReference type="GO" id="GO:0000105">
    <property type="term" value="P:L-histidine biosynthetic process"/>
    <property type="evidence" value="ECO:0007669"/>
    <property type="project" value="UniProtKB-UniRule"/>
</dbReference>
<dbReference type="CDD" id="cd04731">
    <property type="entry name" value="HisF"/>
    <property type="match status" value="1"/>
</dbReference>
<dbReference type="FunFam" id="3.20.20.70:FF:000006">
    <property type="entry name" value="Imidazole glycerol phosphate synthase subunit HisF"/>
    <property type="match status" value="1"/>
</dbReference>
<dbReference type="Gene3D" id="3.20.20.70">
    <property type="entry name" value="Aldolase class I"/>
    <property type="match status" value="1"/>
</dbReference>
<dbReference type="HAMAP" id="MF_01013">
    <property type="entry name" value="HisF"/>
    <property type="match status" value="1"/>
</dbReference>
<dbReference type="InterPro" id="IPR013785">
    <property type="entry name" value="Aldolase_TIM"/>
</dbReference>
<dbReference type="InterPro" id="IPR006062">
    <property type="entry name" value="His_biosynth"/>
</dbReference>
<dbReference type="InterPro" id="IPR004651">
    <property type="entry name" value="HisF"/>
</dbReference>
<dbReference type="InterPro" id="IPR050064">
    <property type="entry name" value="IGPS_HisA/HisF"/>
</dbReference>
<dbReference type="InterPro" id="IPR011060">
    <property type="entry name" value="RibuloseP-bd_barrel"/>
</dbReference>
<dbReference type="NCBIfam" id="TIGR00735">
    <property type="entry name" value="hisF"/>
    <property type="match status" value="1"/>
</dbReference>
<dbReference type="PANTHER" id="PTHR21235:SF2">
    <property type="entry name" value="IMIDAZOLE GLYCEROL PHOSPHATE SYNTHASE HISHF"/>
    <property type="match status" value="1"/>
</dbReference>
<dbReference type="PANTHER" id="PTHR21235">
    <property type="entry name" value="IMIDAZOLE GLYCEROL PHOSPHATE SYNTHASE SUBUNIT HISF/H IGP SYNTHASE SUBUNIT HISF/H"/>
    <property type="match status" value="1"/>
</dbReference>
<dbReference type="Pfam" id="PF00977">
    <property type="entry name" value="His_biosynth"/>
    <property type="match status" value="1"/>
</dbReference>
<dbReference type="SUPFAM" id="SSF51366">
    <property type="entry name" value="Ribulose-phoshate binding barrel"/>
    <property type="match status" value="1"/>
</dbReference>
<protein>
    <recommendedName>
        <fullName evidence="1">Imidazole glycerol phosphate synthase subunit HisF</fullName>
        <ecNumber evidence="1">4.3.2.10</ecNumber>
    </recommendedName>
    <alternativeName>
        <fullName evidence="1">IGP synthase cyclase subunit</fullName>
    </alternativeName>
    <alternativeName>
        <fullName evidence="1">IGP synthase subunit HisF</fullName>
    </alternativeName>
    <alternativeName>
        <fullName evidence="1">ImGP synthase subunit HisF</fullName>
        <shortName evidence="1">IGPS subunit HisF</shortName>
    </alternativeName>
</protein>
<comment type="function">
    <text evidence="1">IGPS catalyzes the conversion of PRFAR and glutamine to IGP, AICAR and glutamate. The HisF subunit catalyzes the cyclization activity that produces IGP and AICAR from PRFAR using the ammonia provided by the HisH subunit.</text>
</comment>
<comment type="catalytic activity">
    <reaction evidence="1">
        <text>5-[(5-phospho-1-deoxy-D-ribulos-1-ylimino)methylamino]-1-(5-phospho-beta-D-ribosyl)imidazole-4-carboxamide + L-glutamine = D-erythro-1-(imidazol-4-yl)glycerol 3-phosphate + 5-amino-1-(5-phospho-beta-D-ribosyl)imidazole-4-carboxamide + L-glutamate + H(+)</text>
        <dbReference type="Rhea" id="RHEA:24793"/>
        <dbReference type="ChEBI" id="CHEBI:15378"/>
        <dbReference type="ChEBI" id="CHEBI:29985"/>
        <dbReference type="ChEBI" id="CHEBI:58278"/>
        <dbReference type="ChEBI" id="CHEBI:58359"/>
        <dbReference type="ChEBI" id="CHEBI:58475"/>
        <dbReference type="ChEBI" id="CHEBI:58525"/>
        <dbReference type="EC" id="4.3.2.10"/>
    </reaction>
</comment>
<comment type="pathway">
    <text evidence="1">Amino-acid biosynthesis; L-histidine biosynthesis; L-histidine from 5-phospho-alpha-D-ribose 1-diphosphate: step 5/9.</text>
</comment>
<comment type="subunit">
    <text evidence="1">Heterodimer of HisH and HisF.</text>
</comment>
<comment type="subcellular location">
    <subcellularLocation>
        <location evidence="1">Cytoplasm</location>
    </subcellularLocation>
</comment>
<comment type="similarity">
    <text evidence="1">Belongs to the HisA/HisF family.</text>
</comment>
<proteinExistence type="inferred from homology"/>